<sequence>MNEVKESLRSIEQKYKLFQQQQFTFIAALEHCRENAHDKIRPISSIEQVQSYMEHYCNNSTHRRILIMFMDICSELSKLCQHFEALHSGTPVTNSLLEKCKTLVSQSNDLSSLRAKYPHEVVNHLSCDEARNHYGGVVSLIPIVLDFMKEWIAHSEKLPRKVLQHGTT</sequence>
<comment type="function">
    <text evidence="6 7">Microtubule inner protein (MIP) part of the dynein-decorated doublet microtubules (DMTs) of multiciliated respiratory cells and the distal singlet microtubules of monoflagellated spermatozoa (PubMed:37865089, PubMed:37989994). Forms an extensive interaction network cross-linking the lumen of axonemal doublet microtubules (PubMed:37865089).</text>
</comment>
<comment type="subunit">
    <text evidence="1 2 3 6 7">Microtubule inner protein component of sperm flagellar doublet microtubules (PubMed:37865089, PubMed:37989994). Interacts with CABP1 and CALR (PubMed:24256100). Interacts with INCA1 (By similarity). Interacts with microtubules (By similarity).</text>
</comment>
<comment type="subcellular location">
    <subcellularLocation>
        <location evidence="3">Cytoplasm</location>
    </subcellularLocation>
    <subcellularLocation>
        <location evidence="3">Cytoplasmic vesicle</location>
        <location evidence="3">Secretory vesicle</location>
        <location evidence="3">Acrosome</location>
    </subcellularLocation>
    <subcellularLocation>
        <location evidence="4">Cytoplasm</location>
        <location evidence="4">Cytoskeleton</location>
        <location evidence="4">Cilium basal body</location>
    </subcellularLocation>
    <subcellularLocation>
        <location evidence="4 6 7">Cytoplasm</location>
        <location evidence="4 6 7">Cytoskeleton</location>
        <location evidence="4 6 7">Flagellum axoneme</location>
    </subcellularLocation>
    <subcellularLocation>
        <location evidence="2">Cytoplasm</location>
        <location evidence="2">Cytoskeleton</location>
        <location evidence="2">Cilium axoneme</location>
    </subcellularLocation>
    <subcellularLocation>
        <location evidence="1">Nucleus</location>
    </subcellularLocation>
    <text evidence="3">In caudal sperms localizes onto sperm head. Is also present on midpiece and principle piece of sperm tails. Acrosome and sperm tail localization is regulated by Y-chromosome.</text>
</comment>
<comment type="alternative products">
    <event type="alternative splicing"/>
    <isoform>
        <id>Q7TPM5-1</id>
        <name>1</name>
        <sequence type="displayed"/>
    </isoform>
    <isoform>
        <id>Q7TPM5-2</id>
        <name>2</name>
        <sequence type="described" ref="VSP_046487 VSP_046488"/>
    </isoform>
</comment>
<comment type="tissue specificity">
    <text evidence="3 4 8">Expressed in sperm (at protein level) (Ref.4). Expressed from almost all the cell types of testis, with abundant expression in round and elongated spermatids (at protein level) (PubMed:24256100). Predominantly expressed in tissues containing motile cilia (PubMed:27914912).</text>
</comment>
<comment type="developmental stage">
    <text evidence="4">Expressed in the developing fetal lung epithelium (at protein level).</text>
</comment>
<comment type="induction">
    <text evidence="4">Expression is activated by FOXJ1 and NOTO.</text>
</comment>
<comment type="disruption phenotype">
    <text evidence="5">Deficient mice are viable, fertile, and have no clear phenotypic differences from wild-type mice.</text>
</comment>
<keyword id="KW-0002">3D-structure</keyword>
<keyword id="KW-0025">Alternative splicing</keyword>
<keyword id="KW-0966">Cell projection</keyword>
<keyword id="KW-0969">Cilium</keyword>
<keyword id="KW-0963">Cytoplasm</keyword>
<keyword id="KW-0968">Cytoplasmic vesicle</keyword>
<keyword id="KW-0206">Cytoskeleton</keyword>
<keyword id="KW-0282">Flagellum</keyword>
<keyword id="KW-0539">Nucleus</keyword>
<keyword id="KW-1185">Reference proteome</keyword>
<accession>Q7TPM5</accession>
<accession>Q3TTJ0</accession>
<accession>Q3U293</accession>
<accession>Q9D9W4</accession>
<reference key="1">
    <citation type="journal article" date="2005" name="Science">
        <title>The transcriptional landscape of the mammalian genome.</title>
        <authorList>
            <person name="Carninci P."/>
            <person name="Kasukawa T."/>
            <person name="Katayama S."/>
            <person name="Gough J."/>
            <person name="Frith M.C."/>
            <person name="Maeda N."/>
            <person name="Oyama R."/>
            <person name="Ravasi T."/>
            <person name="Lenhard B."/>
            <person name="Wells C."/>
            <person name="Kodzius R."/>
            <person name="Shimokawa K."/>
            <person name="Bajic V.B."/>
            <person name="Brenner S.E."/>
            <person name="Batalov S."/>
            <person name="Forrest A.R."/>
            <person name="Zavolan M."/>
            <person name="Davis M.J."/>
            <person name="Wilming L.G."/>
            <person name="Aidinis V."/>
            <person name="Allen J.E."/>
            <person name="Ambesi-Impiombato A."/>
            <person name="Apweiler R."/>
            <person name="Aturaliya R.N."/>
            <person name="Bailey T.L."/>
            <person name="Bansal M."/>
            <person name="Baxter L."/>
            <person name="Beisel K.W."/>
            <person name="Bersano T."/>
            <person name="Bono H."/>
            <person name="Chalk A.M."/>
            <person name="Chiu K.P."/>
            <person name="Choudhary V."/>
            <person name="Christoffels A."/>
            <person name="Clutterbuck D.R."/>
            <person name="Crowe M.L."/>
            <person name="Dalla E."/>
            <person name="Dalrymple B.P."/>
            <person name="de Bono B."/>
            <person name="Della Gatta G."/>
            <person name="di Bernardo D."/>
            <person name="Down T."/>
            <person name="Engstrom P."/>
            <person name="Fagiolini M."/>
            <person name="Faulkner G."/>
            <person name="Fletcher C.F."/>
            <person name="Fukushima T."/>
            <person name="Furuno M."/>
            <person name="Futaki S."/>
            <person name="Gariboldi M."/>
            <person name="Georgii-Hemming P."/>
            <person name="Gingeras T.R."/>
            <person name="Gojobori T."/>
            <person name="Green R.E."/>
            <person name="Gustincich S."/>
            <person name="Harbers M."/>
            <person name="Hayashi Y."/>
            <person name="Hensch T.K."/>
            <person name="Hirokawa N."/>
            <person name="Hill D."/>
            <person name="Huminiecki L."/>
            <person name="Iacono M."/>
            <person name="Ikeo K."/>
            <person name="Iwama A."/>
            <person name="Ishikawa T."/>
            <person name="Jakt M."/>
            <person name="Kanapin A."/>
            <person name="Katoh M."/>
            <person name="Kawasawa Y."/>
            <person name="Kelso J."/>
            <person name="Kitamura H."/>
            <person name="Kitano H."/>
            <person name="Kollias G."/>
            <person name="Krishnan S.P."/>
            <person name="Kruger A."/>
            <person name="Kummerfeld S.K."/>
            <person name="Kurochkin I.V."/>
            <person name="Lareau L.F."/>
            <person name="Lazarevic D."/>
            <person name="Lipovich L."/>
            <person name="Liu J."/>
            <person name="Liuni S."/>
            <person name="McWilliam S."/>
            <person name="Madan Babu M."/>
            <person name="Madera M."/>
            <person name="Marchionni L."/>
            <person name="Matsuda H."/>
            <person name="Matsuzawa S."/>
            <person name="Miki H."/>
            <person name="Mignone F."/>
            <person name="Miyake S."/>
            <person name="Morris K."/>
            <person name="Mottagui-Tabar S."/>
            <person name="Mulder N."/>
            <person name="Nakano N."/>
            <person name="Nakauchi H."/>
            <person name="Ng P."/>
            <person name="Nilsson R."/>
            <person name="Nishiguchi S."/>
            <person name="Nishikawa S."/>
            <person name="Nori F."/>
            <person name="Ohara O."/>
            <person name="Okazaki Y."/>
            <person name="Orlando V."/>
            <person name="Pang K.C."/>
            <person name="Pavan W.J."/>
            <person name="Pavesi G."/>
            <person name="Pesole G."/>
            <person name="Petrovsky N."/>
            <person name="Piazza S."/>
            <person name="Reed J."/>
            <person name="Reid J.F."/>
            <person name="Ring B.Z."/>
            <person name="Ringwald M."/>
            <person name="Rost B."/>
            <person name="Ruan Y."/>
            <person name="Salzberg S.L."/>
            <person name="Sandelin A."/>
            <person name="Schneider C."/>
            <person name="Schoenbach C."/>
            <person name="Sekiguchi K."/>
            <person name="Semple C.A."/>
            <person name="Seno S."/>
            <person name="Sessa L."/>
            <person name="Sheng Y."/>
            <person name="Shibata Y."/>
            <person name="Shimada H."/>
            <person name="Shimada K."/>
            <person name="Silva D."/>
            <person name="Sinclair B."/>
            <person name="Sperling S."/>
            <person name="Stupka E."/>
            <person name="Sugiura K."/>
            <person name="Sultana R."/>
            <person name="Takenaka Y."/>
            <person name="Taki K."/>
            <person name="Tammoja K."/>
            <person name="Tan S.L."/>
            <person name="Tang S."/>
            <person name="Taylor M.S."/>
            <person name="Tegner J."/>
            <person name="Teichmann S.A."/>
            <person name="Ueda H.R."/>
            <person name="van Nimwegen E."/>
            <person name="Verardo R."/>
            <person name="Wei C.L."/>
            <person name="Yagi K."/>
            <person name="Yamanishi H."/>
            <person name="Zabarovsky E."/>
            <person name="Zhu S."/>
            <person name="Zimmer A."/>
            <person name="Hide W."/>
            <person name="Bult C."/>
            <person name="Grimmond S.M."/>
            <person name="Teasdale R.D."/>
            <person name="Liu E.T."/>
            <person name="Brusic V."/>
            <person name="Quackenbush J."/>
            <person name="Wahlestedt C."/>
            <person name="Mattick J.S."/>
            <person name="Hume D.A."/>
            <person name="Kai C."/>
            <person name="Sasaki D."/>
            <person name="Tomaru Y."/>
            <person name="Fukuda S."/>
            <person name="Kanamori-Katayama M."/>
            <person name="Suzuki M."/>
            <person name="Aoki J."/>
            <person name="Arakawa T."/>
            <person name="Iida J."/>
            <person name="Imamura K."/>
            <person name="Itoh M."/>
            <person name="Kato T."/>
            <person name="Kawaji H."/>
            <person name="Kawagashira N."/>
            <person name="Kawashima T."/>
            <person name="Kojima M."/>
            <person name="Kondo S."/>
            <person name="Konno H."/>
            <person name="Nakano K."/>
            <person name="Ninomiya N."/>
            <person name="Nishio T."/>
            <person name="Okada M."/>
            <person name="Plessy C."/>
            <person name="Shibata K."/>
            <person name="Shiraki T."/>
            <person name="Suzuki S."/>
            <person name="Tagami M."/>
            <person name="Waki K."/>
            <person name="Watahiki A."/>
            <person name="Okamura-Oho Y."/>
            <person name="Suzuki H."/>
            <person name="Kawai J."/>
            <person name="Hayashizaki Y."/>
        </authorList>
    </citation>
    <scope>NUCLEOTIDE SEQUENCE [LARGE SCALE MRNA] (ISOFORMS 1 AND 2)</scope>
    <source>
        <strain>C57BL/6J</strain>
        <strain>NOD</strain>
        <tissue>Testis</tissue>
    </source>
</reference>
<reference key="2">
    <citation type="submission" date="2005-07" db="EMBL/GenBank/DDBJ databases">
        <authorList>
            <person name="Mural R.J."/>
            <person name="Adams M.D."/>
            <person name="Myers E.W."/>
            <person name="Smith H.O."/>
            <person name="Venter J.C."/>
        </authorList>
    </citation>
    <scope>NUCLEOTIDE SEQUENCE [LARGE SCALE GENOMIC DNA]</scope>
</reference>
<reference key="3">
    <citation type="journal article" date="2004" name="Genome Res.">
        <title>The status, quality, and expansion of the NIH full-length cDNA project: the Mammalian Gene Collection (MGC).</title>
        <authorList>
            <consortium name="The MGC Project Team"/>
        </authorList>
    </citation>
    <scope>NUCLEOTIDE SEQUENCE [LARGE SCALE MRNA] (ISOFORM 1)</scope>
    <source>
        <tissue>Testis</tissue>
    </source>
</reference>
<reference key="4">
    <citation type="submission" date="2009-06" db="UniProtKB">
        <title>Novel miRNA cluster generated by extensive alternate splicing of a multicopy non-coding RNA from mouse Y-heterochromatin.</title>
        <authorList>
            <person name="Bhattacharya R."/>
            <person name="Dhople V.M."/>
            <person name="Jesudasan R.A."/>
        </authorList>
    </citation>
    <scope>IDENTIFICATION BY MASS SPECTROMETRY</scope>
    <scope>TISSUE SPECIFICITY</scope>
    <source>
        <strain>RIII</strain>
        <tissue>Sperm</tissue>
    </source>
</reference>
<reference key="5">
    <citation type="journal article" date="2010" name="Cell">
        <title>A tissue-specific atlas of mouse protein phosphorylation and expression.</title>
        <authorList>
            <person name="Huttlin E.L."/>
            <person name="Jedrychowski M.P."/>
            <person name="Elias J.E."/>
            <person name="Goswami T."/>
            <person name="Rad R."/>
            <person name="Beausoleil S.A."/>
            <person name="Villen J."/>
            <person name="Haas W."/>
            <person name="Sowa M.E."/>
            <person name="Gygi S.P."/>
        </authorList>
    </citation>
    <scope>IDENTIFICATION BY MASS SPECTROMETRY [LARGE SCALE ANALYSIS]</scope>
    <source>
        <tissue>Testis</tissue>
    </source>
</reference>
<reference key="6">
    <citation type="journal article" date="2013" name="BMC Cell Biol.">
        <title>A mouse protein that localizes to acrosome and sperm tail is regulated by Y-chromosome.</title>
        <authorList>
            <person name="Bhattacharya R."/>
            <person name="Devi M.S."/>
            <person name="Dhople V.M."/>
            <person name="Jesudasan R.A."/>
        </authorList>
    </citation>
    <scope>IDENTIFICATION BY MASS SPECTROMETRY</scope>
    <scope>TISSUE SPECIFICITY</scope>
    <scope>SUBCELLULAR LOCATION</scope>
    <scope>INTERACTION WITH CABP1 AND CALR</scope>
</reference>
<reference key="7">
    <citation type="journal article" date="2017" name="Dev. Biol.">
        <title>Identification of FOXJ1 effectors during ciliogenesis in the foetal respiratory epithelium and embryonic left-right organiser of the mouse.</title>
        <authorList>
            <person name="Stauber M."/>
            <person name="Weidemann M."/>
            <person name="Dittrich-Breiholz O."/>
            <person name="Lobschat K."/>
            <person name="Alten L."/>
            <person name="Mai M."/>
            <person name="Beckers A."/>
            <person name="Kracht M."/>
            <person name="Gossler A."/>
        </authorList>
    </citation>
    <scope>SUBCELLULAR LOCATION</scope>
    <scope>TISSUE SPECIFICITY</scope>
    <scope>DEVELOPMENTAL STAGE</scope>
    <scope>INDUCTION</scope>
</reference>
<reference key="8">
    <citation type="journal article" date="2021" name="J. Cell Sci.">
        <title>FAM209 associates with DPY19L2, and is required for sperm acrosome biogenesis and fertility in mice.</title>
        <authorList>
            <person name="Castaneda J.M."/>
            <person name="Shimada K."/>
            <person name="Satouh Y."/>
            <person name="Yu Z."/>
            <person name="Devlin D.J."/>
            <person name="Ikawa M."/>
            <person name="Matzuk M.M."/>
        </authorList>
    </citation>
    <scope>DISRUPTION PHENOTYPE</scope>
</reference>
<reference evidence="16" key="9">
    <citation type="journal article" date="2023" name="Cell">
        <title>De novo protein identification in mammalian sperm using in situ cryoelectron tomography and AlphaFold2 docking.</title>
        <authorList>
            <person name="Chen Z."/>
            <person name="Shiozaki M."/>
            <person name="Haas K.M."/>
            <person name="Skinner W.M."/>
            <person name="Zhao S."/>
            <person name="Guo C."/>
            <person name="Polacco B.J."/>
            <person name="Yu Z."/>
            <person name="Krogan N.J."/>
            <person name="Lishko P.V."/>
            <person name="Kaake R.M."/>
            <person name="Vale R.D."/>
            <person name="Agard D.A."/>
        </authorList>
    </citation>
    <scope>STRUCTURE BY ELECTRON MICROSCOPY (7.70 ANGSTROMS) OF SPERM FLAGELLAR DOUBLET MICROTUBULES</scope>
    <scope>FUNCTION</scope>
    <scope>SUBCELLULAR LOCATION</scope>
    <scope>SUBUNIT</scope>
</reference>
<reference evidence="14 15" key="10">
    <citation type="journal article" date="2023" name="Cell Discov.">
        <title>In-cell structural insight into the stability of sperm microtubule doublet.</title>
        <authorList>
            <person name="Tai L."/>
            <person name="Yin G."/>
            <person name="Huang X."/>
            <person name="Sun F."/>
            <person name="Zhu Y."/>
        </authorList>
    </citation>
    <scope>STRUCTURE BY ELECTRON MICROSCOPY (4.50 ANGSTROMS)</scope>
    <scope>FUNCTION</scope>
    <scope>SUBUNIT</scope>
    <scope>SUBCELLULAR LOCATION</scope>
</reference>
<feature type="chain" id="PRO_0000089674" description="Sperm acrosome-associated protein 9">
    <location>
        <begin position="1"/>
        <end position="168"/>
    </location>
</feature>
<feature type="site" description="Essential for interaction with INCA1" evidence="1">
    <location>
        <position position="117"/>
    </location>
</feature>
<feature type="site" description="Essential for interaction with INCA1" evidence="1">
    <location>
        <position position="119"/>
    </location>
</feature>
<feature type="splice variant" id="VSP_046487" description="In isoform 2." evidence="9">
    <original>YPHEVVNHLSCDEARNH</original>
    <variation>GRHSFCTVASSGGDIQE</variation>
    <location>
        <begin position="117"/>
        <end position="133"/>
    </location>
</feature>
<feature type="splice variant" id="VSP_046488" description="In isoform 2." evidence="9">
    <location>
        <begin position="134"/>
        <end position="168"/>
    </location>
</feature>
<feature type="sequence conflict" description="In Ref. 1; BAB24565." evidence="12" ref="1">
    <original>A</original>
    <variation>D</variation>
    <location>
        <position position="115"/>
    </location>
</feature>
<name>SACA9_MOUSE</name>
<gene>
    <name evidence="13" type="primary">Spaca9</name>
</gene>
<evidence type="ECO:0000250" key="1">
    <source>
        <dbReference type="UniProtKB" id="Q4V8P4"/>
    </source>
</evidence>
<evidence type="ECO:0000250" key="2">
    <source>
        <dbReference type="UniProtKB" id="Q96E40"/>
    </source>
</evidence>
<evidence type="ECO:0000269" key="3">
    <source>
    </source>
</evidence>
<evidence type="ECO:0000269" key="4">
    <source>
    </source>
</evidence>
<evidence type="ECO:0000269" key="5">
    <source>
    </source>
</evidence>
<evidence type="ECO:0000269" key="6">
    <source>
    </source>
</evidence>
<evidence type="ECO:0000269" key="7">
    <source>
    </source>
</evidence>
<evidence type="ECO:0000269" key="8">
    <source ref="4"/>
</evidence>
<evidence type="ECO:0000303" key="9">
    <source>
    </source>
</evidence>
<evidence type="ECO:0000303" key="10">
    <source>
    </source>
</evidence>
<evidence type="ECO:0000303" key="11">
    <source ref="4"/>
</evidence>
<evidence type="ECO:0000305" key="12"/>
<evidence type="ECO:0000312" key="13">
    <source>
        <dbReference type="MGI" id="MGI:1917237"/>
    </source>
</evidence>
<evidence type="ECO:0007744" key="14">
    <source>
        <dbReference type="PDB" id="8I7O"/>
    </source>
</evidence>
<evidence type="ECO:0007744" key="15">
    <source>
        <dbReference type="PDB" id="8I7R"/>
    </source>
</evidence>
<evidence type="ECO:0007744" key="16">
    <source>
        <dbReference type="PDB" id="8TO0"/>
    </source>
</evidence>
<proteinExistence type="evidence at protein level"/>
<organism>
    <name type="scientific">Mus musculus</name>
    <name type="common">Mouse</name>
    <dbReference type="NCBI Taxonomy" id="10090"/>
    <lineage>
        <taxon>Eukaryota</taxon>
        <taxon>Metazoa</taxon>
        <taxon>Chordata</taxon>
        <taxon>Craniata</taxon>
        <taxon>Vertebrata</taxon>
        <taxon>Euteleostomi</taxon>
        <taxon>Mammalia</taxon>
        <taxon>Eutheria</taxon>
        <taxon>Euarchontoglires</taxon>
        <taxon>Glires</taxon>
        <taxon>Rodentia</taxon>
        <taxon>Myomorpha</taxon>
        <taxon>Muroidea</taxon>
        <taxon>Muridae</taxon>
        <taxon>Murinae</taxon>
        <taxon>Mus</taxon>
        <taxon>Mus</taxon>
    </lineage>
</organism>
<dbReference type="EMBL" id="AK006393">
    <property type="protein sequence ID" value="BAB24565.1"/>
    <property type="molecule type" value="mRNA"/>
</dbReference>
<dbReference type="EMBL" id="AK155408">
    <property type="protein sequence ID" value="BAE33249.1"/>
    <property type="molecule type" value="mRNA"/>
</dbReference>
<dbReference type="EMBL" id="AK161340">
    <property type="protein sequence ID" value="BAE36335.1"/>
    <property type="molecule type" value="mRNA"/>
</dbReference>
<dbReference type="EMBL" id="CH466542">
    <property type="protein sequence ID" value="EDL08395.1"/>
    <property type="molecule type" value="Genomic_DNA"/>
</dbReference>
<dbReference type="EMBL" id="BC055108">
    <property type="protein sequence ID" value="AAH55108.1"/>
    <property type="molecule type" value="mRNA"/>
</dbReference>
<dbReference type="CCDS" id="CCDS15845.1">
    <molecule id="Q7TPM5-1"/>
</dbReference>
<dbReference type="RefSeq" id="NP_081559.1">
    <molecule id="Q7TPM5-1"/>
    <property type="nucleotide sequence ID" value="NM_027283.1"/>
</dbReference>
<dbReference type="PDB" id="8I7O">
    <property type="method" value="EM"/>
    <property type="resolution" value="4.50 A"/>
    <property type="chains" value="YI/YJ/YK/YL/YM/YN=1-168"/>
</dbReference>
<dbReference type="PDB" id="8I7R">
    <property type="method" value="EM"/>
    <property type="resolution" value="6.50 A"/>
    <property type="chains" value="YA/YB/YC/YD/YE/YF/YG/YH/YI/YJ/YK/YL/YM/YN/YO/YP/YQ/YR/YS/YT/YU/YV/YW=1-168"/>
</dbReference>
<dbReference type="PDB" id="8TO0">
    <property type="method" value="EM"/>
    <property type="resolution" value="7.70 A"/>
    <property type="chains" value="F0/F1/F2/F3/F4/F5/F6/F7/F8/F9/GA/GB/GC/GD/GE/GF/GG/GH/GI/GJ/GK/GL/GM/GN/GO/GP/GQ=1-168"/>
</dbReference>
<dbReference type="PDBsum" id="8I7O"/>
<dbReference type="PDBsum" id="8I7R"/>
<dbReference type="PDBsum" id="8TO0"/>
<dbReference type="EMDB" id="EMD-35229"/>
<dbReference type="EMDB" id="EMD-35230"/>
<dbReference type="EMDB" id="EMD-41431"/>
<dbReference type="SMR" id="Q7TPM5"/>
<dbReference type="FunCoup" id="Q7TPM5">
    <property type="interactions" value="155"/>
</dbReference>
<dbReference type="STRING" id="10090.ENSMUSP00000121846"/>
<dbReference type="iPTMnet" id="Q7TPM5"/>
<dbReference type="PhosphoSitePlus" id="Q7TPM5"/>
<dbReference type="SwissPalm" id="Q7TPM5"/>
<dbReference type="PaxDb" id="10090-ENSMUSP00000121846"/>
<dbReference type="PeptideAtlas" id="Q7TPM5"/>
<dbReference type="ProteomicsDB" id="256584">
    <molecule id="Q7TPM5-1"/>
</dbReference>
<dbReference type="ProteomicsDB" id="256585">
    <molecule id="Q7TPM5-2"/>
</dbReference>
<dbReference type="Antibodypedia" id="18219">
    <property type="antibodies" value="54 antibodies from 14 providers"/>
</dbReference>
<dbReference type="DNASU" id="69987"/>
<dbReference type="Ensembl" id="ENSMUST00000102877.8">
    <molecule id="Q7TPM5-1"/>
    <property type="protein sequence ID" value="ENSMUSP00000099941.2"/>
    <property type="gene ID" value="ENSMUSG00000026809.16"/>
</dbReference>
<dbReference type="Ensembl" id="ENSMUST00000124840.2">
    <molecule id="Q7TPM5-1"/>
    <property type="protein sequence ID" value="ENSMUSP00000121846.2"/>
    <property type="gene ID" value="ENSMUSG00000026809.16"/>
</dbReference>
<dbReference type="GeneID" id="69987"/>
<dbReference type="KEGG" id="mmu:69987"/>
<dbReference type="UCSC" id="uc008iza.1">
    <molecule id="Q7TPM5-1"/>
    <property type="organism name" value="mouse"/>
</dbReference>
<dbReference type="UCSC" id="uc008izc.1">
    <molecule id="Q7TPM5-2"/>
    <property type="organism name" value="mouse"/>
</dbReference>
<dbReference type="AGR" id="MGI:1917237"/>
<dbReference type="CTD" id="11092"/>
<dbReference type="MGI" id="MGI:1917237">
    <property type="gene designation" value="Spaca9"/>
</dbReference>
<dbReference type="VEuPathDB" id="HostDB:ENSMUSG00000026809"/>
<dbReference type="eggNOG" id="ENOG502QQV9">
    <property type="taxonomic scope" value="Eukaryota"/>
</dbReference>
<dbReference type="GeneTree" id="ENSGT00390000007746"/>
<dbReference type="HOGENOM" id="CLU_100443_0_0_1"/>
<dbReference type="InParanoid" id="Q7TPM5"/>
<dbReference type="OMA" id="EHHCYNS"/>
<dbReference type="OrthoDB" id="9999829at2759"/>
<dbReference type="PhylomeDB" id="Q7TPM5"/>
<dbReference type="TreeFam" id="TF328897"/>
<dbReference type="BioGRID-ORCS" id="69987">
    <property type="hits" value="0 hits in 78 CRISPR screens"/>
</dbReference>
<dbReference type="ChiTaRS" id="Spaca9">
    <property type="organism name" value="mouse"/>
</dbReference>
<dbReference type="PRO" id="PR:Q7TPM5"/>
<dbReference type="Proteomes" id="UP000000589">
    <property type="component" value="Chromosome 2"/>
</dbReference>
<dbReference type="RNAct" id="Q7TPM5">
    <property type="molecule type" value="protein"/>
</dbReference>
<dbReference type="Bgee" id="ENSMUSG00000026809">
    <property type="expression patterns" value="Expressed in seminiferous tubule of testis and 89 other cell types or tissues"/>
</dbReference>
<dbReference type="GO" id="GO:0001669">
    <property type="term" value="C:acrosomal vesicle"/>
    <property type="evidence" value="ECO:0000314"/>
    <property type="project" value="UniProtKB"/>
</dbReference>
<dbReference type="GO" id="GO:0005879">
    <property type="term" value="C:axonemal microtubule"/>
    <property type="evidence" value="ECO:0000250"/>
    <property type="project" value="UniProtKB"/>
</dbReference>
<dbReference type="GO" id="GO:0160110">
    <property type="term" value="C:axonemal microtubule doublet inner sheath"/>
    <property type="evidence" value="ECO:0000314"/>
    <property type="project" value="UniProtKB"/>
</dbReference>
<dbReference type="GO" id="GO:0036064">
    <property type="term" value="C:ciliary basal body"/>
    <property type="evidence" value="ECO:0000314"/>
    <property type="project" value="UniProtKB"/>
</dbReference>
<dbReference type="GO" id="GO:0097546">
    <property type="term" value="C:ciliary base"/>
    <property type="evidence" value="ECO:0000314"/>
    <property type="project" value="MGI"/>
</dbReference>
<dbReference type="GO" id="GO:0005737">
    <property type="term" value="C:cytoplasm"/>
    <property type="evidence" value="ECO:0000314"/>
    <property type="project" value="UniProtKB"/>
</dbReference>
<dbReference type="GO" id="GO:0005881">
    <property type="term" value="C:cytoplasmic microtubule"/>
    <property type="evidence" value="ECO:0000250"/>
    <property type="project" value="UniProtKB"/>
</dbReference>
<dbReference type="GO" id="GO:0005634">
    <property type="term" value="C:nucleus"/>
    <property type="evidence" value="ECO:0000250"/>
    <property type="project" value="UniProtKB"/>
</dbReference>
<dbReference type="GO" id="GO:0036126">
    <property type="term" value="C:sperm flagellum"/>
    <property type="evidence" value="ECO:0000314"/>
    <property type="project" value="UniProtKB"/>
</dbReference>
<dbReference type="GO" id="GO:0048306">
    <property type="term" value="F:calcium-dependent protein binding"/>
    <property type="evidence" value="ECO:0000353"/>
    <property type="project" value="UniProtKB"/>
</dbReference>
<dbReference type="GO" id="GO:0008017">
    <property type="term" value="F:microtubule binding"/>
    <property type="evidence" value="ECO:0000250"/>
    <property type="project" value="UniProtKB"/>
</dbReference>
<dbReference type="GO" id="GO:0035082">
    <property type="term" value="P:axoneme assembly"/>
    <property type="evidence" value="ECO:0007669"/>
    <property type="project" value="Ensembl"/>
</dbReference>
<dbReference type="GO" id="GO:0030317">
    <property type="term" value="P:flagellated sperm motility"/>
    <property type="evidence" value="ECO:0000314"/>
    <property type="project" value="UniProtKB"/>
</dbReference>
<dbReference type="InterPro" id="IPR027818">
    <property type="entry name" value="SPACA9"/>
</dbReference>
<dbReference type="PANTHER" id="PTHR32455">
    <property type="entry name" value="SPERM ACROSOME-ASSOCIATED PROTEIN 9"/>
    <property type="match status" value="1"/>
</dbReference>
<dbReference type="PANTHER" id="PTHR32455:SF1">
    <property type="entry name" value="SPERM ACROSOME-ASSOCIATED PROTEIN 9"/>
    <property type="match status" value="1"/>
</dbReference>
<dbReference type="Pfam" id="PF15120">
    <property type="entry name" value="SPACA9"/>
    <property type="match status" value="1"/>
</dbReference>
<protein>
    <recommendedName>
        <fullName>Sperm acrosome-associated protein 9</fullName>
    </recommendedName>
    <alternativeName>
        <fullName evidence="10 11">Acrosome and sperm tail protein</fullName>
        <shortName evidence="10 11">MAST</shortName>
    </alternativeName>
</protein>